<dbReference type="EMBL" id="BX000557">
    <property type="status" value="NOT_ANNOTATED_CDS"/>
    <property type="molecule type" value="Genomic_DNA"/>
</dbReference>
<dbReference type="EMBL" id="AP014968">
    <property type="status" value="NOT_ANNOTATED_CDS"/>
    <property type="molecule type" value="Genomic_DNA"/>
</dbReference>
<dbReference type="EMBL" id="AK288001">
    <property type="status" value="NOT_ANNOTATED_CDS"/>
    <property type="molecule type" value="mRNA"/>
</dbReference>
<dbReference type="SMR" id="Q0INT0"/>
<dbReference type="FunCoup" id="Q0INT0">
    <property type="interactions" value="798"/>
</dbReference>
<dbReference type="STRING" id="39947.Q0INT0"/>
<dbReference type="PaxDb" id="39947-Q0INT0"/>
<dbReference type="eggNOG" id="KOG0654">
    <property type="taxonomic scope" value="Eukaryota"/>
</dbReference>
<dbReference type="HOGENOM" id="CLU_020695_13_2_1"/>
<dbReference type="InParanoid" id="Q0INT0"/>
<dbReference type="OrthoDB" id="5590282at2759"/>
<dbReference type="Proteomes" id="UP000000763">
    <property type="component" value="Chromosome 12"/>
</dbReference>
<dbReference type="Proteomes" id="UP000059680">
    <property type="component" value="Chromosome 12"/>
</dbReference>
<dbReference type="GO" id="GO:0000307">
    <property type="term" value="C:cyclin-dependent protein kinase holoenzyme complex"/>
    <property type="evidence" value="ECO:0000318"/>
    <property type="project" value="GO_Central"/>
</dbReference>
<dbReference type="GO" id="GO:0005737">
    <property type="term" value="C:cytoplasm"/>
    <property type="evidence" value="ECO:0000318"/>
    <property type="project" value="GO_Central"/>
</dbReference>
<dbReference type="GO" id="GO:0005634">
    <property type="term" value="C:nucleus"/>
    <property type="evidence" value="ECO:0000318"/>
    <property type="project" value="GO_Central"/>
</dbReference>
<dbReference type="GO" id="GO:0016538">
    <property type="term" value="F:cyclin-dependent protein serine/threonine kinase regulator activity"/>
    <property type="evidence" value="ECO:0000318"/>
    <property type="project" value="GO_Central"/>
</dbReference>
<dbReference type="GO" id="GO:0051301">
    <property type="term" value="P:cell division"/>
    <property type="evidence" value="ECO:0007669"/>
    <property type="project" value="UniProtKB-KW"/>
</dbReference>
<dbReference type="GO" id="GO:0000082">
    <property type="term" value="P:G1/S transition of mitotic cell cycle"/>
    <property type="evidence" value="ECO:0000318"/>
    <property type="project" value="GO_Central"/>
</dbReference>
<dbReference type="CDD" id="cd20506">
    <property type="entry name" value="CYCLIN_AtCycA-like_rpt2"/>
    <property type="match status" value="1"/>
</dbReference>
<dbReference type="CDD" id="cd20562">
    <property type="entry name" value="CYCLIN_AtCycA_like_rpt1"/>
    <property type="match status" value="1"/>
</dbReference>
<dbReference type="FunFam" id="1.10.472.10:FF:000013">
    <property type="entry name" value="Cyclin A1"/>
    <property type="match status" value="1"/>
</dbReference>
<dbReference type="FunFam" id="1.10.472.10:FF:000103">
    <property type="entry name" value="Cyclin B1"/>
    <property type="match status" value="1"/>
</dbReference>
<dbReference type="FunFam" id="1.10.472.10:FF:000167">
    <property type="entry name" value="Mitotic cyclin 6"/>
    <property type="match status" value="1"/>
</dbReference>
<dbReference type="Gene3D" id="1.10.472.10">
    <property type="entry name" value="Cyclin-like"/>
    <property type="match status" value="2"/>
</dbReference>
<dbReference type="InterPro" id="IPR039361">
    <property type="entry name" value="Cyclin"/>
</dbReference>
<dbReference type="InterPro" id="IPR013763">
    <property type="entry name" value="Cyclin-like_dom"/>
</dbReference>
<dbReference type="InterPro" id="IPR036915">
    <property type="entry name" value="Cyclin-like_sf"/>
</dbReference>
<dbReference type="InterPro" id="IPR046965">
    <property type="entry name" value="Cyclin_A/B-like"/>
</dbReference>
<dbReference type="InterPro" id="IPR004367">
    <property type="entry name" value="Cyclin_C-dom"/>
</dbReference>
<dbReference type="InterPro" id="IPR006671">
    <property type="entry name" value="Cyclin_N"/>
</dbReference>
<dbReference type="InterPro" id="IPR048258">
    <property type="entry name" value="Cyclins_cyclin-box"/>
</dbReference>
<dbReference type="PANTHER" id="PTHR10177">
    <property type="entry name" value="CYCLINS"/>
    <property type="match status" value="1"/>
</dbReference>
<dbReference type="Pfam" id="PF02984">
    <property type="entry name" value="Cyclin_C"/>
    <property type="match status" value="1"/>
</dbReference>
<dbReference type="Pfam" id="PF00134">
    <property type="entry name" value="Cyclin_N"/>
    <property type="match status" value="1"/>
</dbReference>
<dbReference type="PIRSF" id="PIRSF001771">
    <property type="entry name" value="Cyclin_A_B_D_E"/>
    <property type="match status" value="1"/>
</dbReference>
<dbReference type="SMART" id="SM00385">
    <property type="entry name" value="CYCLIN"/>
    <property type="match status" value="2"/>
</dbReference>
<dbReference type="SMART" id="SM01332">
    <property type="entry name" value="Cyclin_C"/>
    <property type="match status" value="1"/>
</dbReference>
<dbReference type="SUPFAM" id="SSF47954">
    <property type="entry name" value="Cyclin-like"/>
    <property type="match status" value="2"/>
</dbReference>
<dbReference type="PROSITE" id="PS00292">
    <property type="entry name" value="CYCLINS"/>
    <property type="match status" value="1"/>
</dbReference>
<protein>
    <recommendedName>
        <fullName>Cyclin-A1-3</fullName>
    </recommendedName>
    <alternativeName>
        <fullName>G2/mitotic-specific cyclin-A1-3</fullName>
        <shortName>CycA1;3</shortName>
    </alternativeName>
</protein>
<reference key="1">
    <citation type="journal article" date="2005" name="BMC Biol.">
        <title>The sequence of rice chromosomes 11 and 12, rich in disease resistance genes and recent gene duplications.</title>
        <authorList>
            <consortium name="The rice chromosomes 11 and 12 sequencing consortia"/>
        </authorList>
    </citation>
    <scope>NUCLEOTIDE SEQUENCE [LARGE SCALE GENOMIC DNA]</scope>
    <source>
        <strain>cv. Nipponbare</strain>
    </source>
</reference>
<reference key="2">
    <citation type="journal article" date="2005" name="Nature">
        <title>The map-based sequence of the rice genome.</title>
        <authorList>
            <consortium name="International rice genome sequencing project (IRGSP)"/>
        </authorList>
    </citation>
    <scope>NUCLEOTIDE SEQUENCE [LARGE SCALE GENOMIC DNA]</scope>
    <source>
        <strain>cv. Nipponbare</strain>
    </source>
</reference>
<reference key="3">
    <citation type="journal article" date="2013" name="Rice">
        <title>Improvement of the Oryza sativa Nipponbare reference genome using next generation sequence and optical map data.</title>
        <authorList>
            <person name="Kawahara Y."/>
            <person name="de la Bastide M."/>
            <person name="Hamilton J.P."/>
            <person name="Kanamori H."/>
            <person name="McCombie W.R."/>
            <person name="Ouyang S."/>
            <person name="Schwartz D.C."/>
            <person name="Tanaka T."/>
            <person name="Wu J."/>
            <person name="Zhou S."/>
            <person name="Childs K.L."/>
            <person name="Davidson R.M."/>
            <person name="Lin H."/>
            <person name="Quesada-Ocampo L."/>
            <person name="Vaillancourt B."/>
            <person name="Sakai H."/>
            <person name="Lee S.S."/>
            <person name="Kim J."/>
            <person name="Numa H."/>
            <person name="Itoh T."/>
            <person name="Buell C.R."/>
            <person name="Matsumoto T."/>
        </authorList>
    </citation>
    <scope>GENOME REANNOTATION</scope>
    <source>
        <strain>cv. Nipponbare</strain>
    </source>
</reference>
<reference key="4">
    <citation type="submission" date="2007-09" db="EMBL/GenBank/DDBJ databases">
        <title>Oryza sativa full length cDNA.</title>
        <authorList>
            <consortium name="The rice full-length cDNA consortium"/>
        </authorList>
    </citation>
    <scope>NUCLEOTIDE SEQUENCE [LARGE SCALE MRNA] (ISOFORM 2)</scope>
    <source>
        <strain>cv. Nipponbare</strain>
    </source>
</reference>
<reference key="5">
    <citation type="journal article" date="2006" name="Mol. Genet. Genomics">
        <title>Genome-wide analysis of cyclin family in rice (Oryza sativa L.).</title>
        <authorList>
            <person name="La H."/>
            <person name="Li J."/>
            <person name="Ji Z."/>
            <person name="Cheng Y."/>
            <person name="Li X."/>
            <person name="Jiang S."/>
            <person name="Venkatesh P.N."/>
            <person name="Ramachandran S."/>
        </authorList>
    </citation>
    <scope>GENE FAMILY</scope>
    <scope>NOMENCLATURE</scope>
</reference>
<organism>
    <name type="scientific">Oryza sativa subsp. japonica</name>
    <name type="common">Rice</name>
    <dbReference type="NCBI Taxonomy" id="39947"/>
    <lineage>
        <taxon>Eukaryota</taxon>
        <taxon>Viridiplantae</taxon>
        <taxon>Streptophyta</taxon>
        <taxon>Embryophyta</taxon>
        <taxon>Tracheophyta</taxon>
        <taxon>Spermatophyta</taxon>
        <taxon>Magnoliopsida</taxon>
        <taxon>Liliopsida</taxon>
        <taxon>Poales</taxon>
        <taxon>Poaceae</taxon>
        <taxon>BOP clade</taxon>
        <taxon>Oryzoideae</taxon>
        <taxon>Oryzeae</taxon>
        <taxon>Oryzinae</taxon>
        <taxon>Oryza</taxon>
        <taxon>Oryza sativa</taxon>
    </lineage>
</organism>
<comment type="alternative products">
    <event type="alternative splicing"/>
    <isoform>
        <id>Q0INT0-1</id>
        <name>1</name>
        <sequence type="displayed"/>
    </isoform>
    <isoform>
        <id>Q0INT0-2</id>
        <name>2</name>
        <sequence type="described" ref="VSP_025279"/>
    </isoform>
</comment>
<comment type="similarity">
    <text evidence="3">Belongs to the cyclin family. Cyclin AB subfamily.</text>
</comment>
<keyword id="KW-0025">Alternative splicing</keyword>
<keyword id="KW-0131">Cell cycle</keyword>
<keyword id="KW-0132">Cell division</keyword>
<keyword id="KW-0195">Cyclin</keyword>
<keyword id="KW-1185">Reference proteome</keyword>
<gene>
    <name type="primary">CYCA1-3</name>
    <name type="ordered locus">LOC_Os12g20324</name>
</gene>
<sequence length="491" mass="54048">MSSSLASRRSSSSSAAKRPAAGEGGGKAAAGAAAAKKRVALGNITNVAAAANNAKFNSATWAAPVKKGSLASGRNVGTNRVSAVKSASTKPASAISRHESAPQKESVLPPKVLRIVPTAAPAPVTVPCSSFVSPMHSGDSVSVDETMSTCDSMKSPDFEYIDNGDSSSVLGSLQRRANENLRISEDRDVEETKWKKDAPSPMEIDQICDVDNNYEDPQLCATLASDIYMHLREAETRKHPSTDFMETLQKDVNPSMRAILIDWLVEVAEEYRLVPDTLYLTVNYIDRYLSGNEINRQRLQLLGVACMLIAAKYKEICAPQVEEFCYITDNTYFRDEVLEMEASVLNYLKFEMTAPTAKCFLRRFVRVAQVSDEDPALHLEFLANYVAELSLLEYNLLSYPPSLVAASAIFLAKFILQPAKHPWNSTLAHYTQYKSSELSDCVKALHRLFCVGPGSNLPAIREKYTQHKYKFVAKKPCPPSIPTEFFRDSTC</sequence>
<proteinExistence type="evidence at transcript level"/>
<feature type="chain" id="PRO_0000286991" description="Cyclin-A1-3">
    <location>
        <begin position="1"/>
        <end position="491"/>
    </location>
</feature>
<feature type="region of interest" description="Disordered" evidence="1">
    <location>
        <begin position="1"/>
        <end position="32"/>
    </location>
</feature>
<feature type="region of interest" description="Disordered" evidence="1">
    <location>
        <begin position="69"/>
        <end position="106"/>
    </location>
</feature>
<feature type="compositionally biased region" description="Low complexity" evidence="1">
    <location>
        <begin position="1"/>
        <end position="21"/>
    </location>
</feature>
<feature type="compositionally biased region" description="Polar residues" evidence="1">
    <location>
        <begin position="75"/>
        <end position="91"/>
    </location>
</feature>
<feature type="splice variant" id="VSP_025279" description="In isoform 2." evidence="2">
    <location>
        <begin position="1"/>
        <end position="146"/>
    </location>
</feature>
<evidence type="ECO:0000256" key="1">
    <source>
        <dbReference type="SAM" id="MobiDB-lite"/>
    </source>
</evidence>
<evidence type="ECO:0000303" key="2">
    <source ref="4"/>
</evidence>
<evidence type="ECO:0000305" key="3"/>
<name>CCA13_ORYSJ</name>
<accession>Q0INT0</accession>
<accession>Q0INT1</accession>